<gene>
    <name evidence="1" type="primary">pepA</name>
    <name type="ordered locus">CTA_0049</name>
</gene>
<protein>
    <recommendedName>
        <fullName evidence="1">Probable cytosol aminopeptidase</fullName>
        <ecNumber evidence="1">3.4.11.1</ecNumber>
    </recommendedName>
    <alternativeName>
        <fullName evidence="1">Leucine aminopeptidase</fullName>
        <shortName evidence="1">LAP</shortName>
        <ecNumber evidence="1">3.4.11.10</ecNumber>
    </alternativeName>
    <alternativeName>
        <fullName evidence="1">Leucyl aminopeptidase</fullName>
    </alternativeName>
</protein>
<evidence type="ECO:0000255" key="1">
    <source>
        <dbReference type="HAMAP-Rule" id="MF_00181"/>
    </source>
</evidence>
<sequence>MVLLYSQASWDKRSKADALVLPFWMKNSKAQEAAVVDEDYKLVYQNALSNFSGKKGETAFLFGNDHTKEQKIVLLGLGKSEEVSGTTVLEAYAQATTVLRKAKCKTVNILLPTISQLRFSVEEFLTNLAAGVLSLNYNYPTYHKVDTSLPFLEKVTVVGIVSKVGDKIFRKEESLFEGVYLTRDLVNTNADEVTPEKLAAVAKGLAGEFASLDVKILDRKAILKEKMGLLAAVAKGAAVEPRFIVLDYQGNPKSKDRTVLIGKGVTFDSGGLDLKPGKAMITMKEDMAGAATVLGIFSALASLELPINVTGIIPATENAIGSAAYKMGDVYVGMTGLSVEIGSTDAEGRLILADAISYALKYCNPTRIIDFATLTGAMVVSLGESVAGFFANNDVLARDLAEASSETGEALWRMPLVEKYDPALHSDIADMKNIGSNRAGSITAALFLQRFLEDNPVAWAHLDIAGTAYHEKEELPYPKYATGFGVRCLIHYMEKFLSK</sequence>
<keyword id="KW-0031">Aminopeptidase</keyword>
<keyword id="KW-0963">Cytoplasm</keyword>
<keyword id="KW-0378">Hydrolase</keyword>
<keyword id="KW-0464">Manganese</keyword>
<keyword id="KW-0479">Metal-binding</keyword>
<keyword id="KW-0645">Protease</keyword>
<accession>Q3KMX6</accession>
<feature type="chain" id="PRO_1000019906" description="Probable cytosol aminopeptidase">
    <location>
        <begin position="1"/>
        <end position="499"/>
    </location>
</feature>
<feature type="active site" evidence="1">
    <location>
        <position position="275"/>
    </location>
</feature>
<feature type="active site" evidence="1">
    <location>
        <position position="349"/>
    </location>
</feature>
<feature type="binding site" evidence="1">
    <location>
        <position position="263"/>
    </location>
    <ligand>
        <name>Mn(2+)</name>
        <dbReference type="ChEBI" id="CHEBI:29035"/>
        <label>2</label>
    </ligand>
</feature>
<feature type="binding site" evidence="1">
    <location>
        <position position="268"/>
    </location>
    <ligand>
        <name>Mn(2+)</name>
        <dbReference type="ChEBI" id="CHEBI:29035"/>
        <label>1</label>
    </ligand>
</feature>
<feature type="binding site" evidence="1">
    <location>
        <position position="268"/>
    </location>
    <ligand>
        <name>Mn(2+)</name>
        <dbReference type="ChEBI" id="CHEBI:29035"/>
        <label>2</label>
    </ligand>
</feature>
<feature type="binding site" evidence="1">
    <location>
        <position position="286"/>
    </location>
    <ligand>
        <name>Mn(2+)</name>
        <dbReference type="ChEBI" id="CHEBI:29035"/>
        <label>2</label>
    </ligand>
</feature>
<feature type="binding site" evidence="1">
    <location>
        <position position="345"/>
    </location>
    <ligand>
        <name>Mn(2+)</name>
        <dbReference type="ChEBI" id="CHEBI:29035"/>
        <label>1</label>
    </ligand>
</feature>
<feature type="binding site" evidence="1">
    <location>
        <position position="347"/>
    </location>
    <ligand>
        <name>Mn(2+)</name>
        <dbReference type="ChEBI" id="CHEBI:29035"/>
        <label>1</label>
    </ligand>
</feature>
<feature type="binding site" evidence="1">
    <location>
        <position position="347"/>
    </location>
    <ligand>
        <name>Mn(2+)</name>
        <dbReference type="ChEBI" id="CHEBI:29035"/>
        <label>2</label>
    </ligand>
</feature>
<dbReference type="EC" id="3.4.11.1" evidence="1"/>
<dbReference type="EC" id="3.4.11.10" evidence="1"/>
<dbReference type="EMBL" id="CP000051">
    <property type="protein sequence ID" value="AAX50296.1"/>
    <property type="molecule type" value="Genomic_DNA"/>
</dbReference>
<dbReference type="RefSeq" id="WP_011324533.1">
    <property type="nucleotide sequence ID" value="NC_007429.1"/>
</dbReference>
<dbReference type="SMR" id="Q3KMX6"/>
<dbReference type="KEGG" id="cta:CTA_0049"/>
<dbReference type="HOGENOM" id="CLU_013734_2_2_0"/>
<dbReference type="Proteomes" id="UP000002532">
    <property type="component" value="Chromosome"/>
</dbReference>
<dbReference type="GO" id="GO:0005737">
    <property type="term" value="C:cytoplasm"/>
    <property type="evidence" value="ECO:0007669"/>
    <property type="project" value="UniProtKB-SubCell"/>
</dbReference>
<dbReference type="GO" id="GO:0030145">
    <property type="term" value="F:manganese ion binding"/>
    <property type="evidence" value="ECO:0007669"/>
    <property type="project" value="UniProtKB-UniRule"/>
</dbReference>
<dbReference type="GO" id="GO:0070006">
    <property type="term" value="F:metalloaminopeptidase activity"/>
    <property type="evidence" value="ECO:0007669"/>
    <property type="project" value="InterPro"/>
</dbReference>
<dbReference type="GO" id="GO:0006508">
    <property type="term" value="P:proteolysis"/>
    <property type="evidence" value="ECO:0007669"/>
    <property type="project" value="UniProtKB-KW"/>
</dbReference>
<dbReference type="CDD" id="cd00433">
    <property type="entry name" value="Peptidase_M17"/>
    <property type="match status" value="1"/>
</dbReference>
<dbReference type="Gene3D" id="3.40.220.10">
    <property type="entry name" value="Leucine Aminopeptidase, subunit E, domain 1"/>
    <property type="match status" value="1"/>
</dbReference>
<dbReference type="Gene3D" id="3.40.630.10">
    <property type="entry name" value="Zn peptidases"/>
    <property type="match status" value="1"/>
</dbReference>
<dbReference type="HAMAP" id="MF_00181">
    <property type="entry name" value="Cytosol_peptidase_M17"/>
    <property type="match status" value="1"/>
</dbReference>
<dbReference type="InterPro" id="IPR011356">
    <property type="entry name" value="Leucine_aapep/pepB"/>
</dbReference>
<dbReference type="InterPro" id="IPR043472">
    <property type="entry name" value="Macro_dom-like"/>
</dbReference>
<dbReference type="InterPro" id="IPR000819">
    <property type="entry name" value="Peptidase_M17_C"/>
</dbReference>
<dbReference type="InterPro" id="IPR023042">
    <property type="entry name" value="Peptidase_M17_leu_NH2_pept"/>
</dbReference>
<dbReference type="InterPro" id="IPR008283">
    <property type="entry name" value="Peptidase_M17_N"/>
</dbReference>
<dbReference type="NCBIfam" id="NF002078">
    <property type="entry name" value="PRK00913.2-5"/>
    <property type="match status" value="1"/>
</dbReference>
<dbReference type="NCBIfam" id="NF002083">
    <property type="entry name" value="PRK00913.3-5"/>
    <property type="match status" value="1"/>
</dbReference>
<dbReference type="PANTHER" id="PTHR11963:SF23">
    <property type="entry name" value="CYTOSOL AMINOPEPTIDASE"/>
    <property type="match status" value="1"/>
</dbReference>
<dbReference type="PANTHER" id="PTHR11963">
    <property type="entry name" value="LEUCINE AMINOPEPTIDASE-RELATED"/>
    <property type="match status" value="1"/>
</dbReference>
<dbReference type="Pfam" id="PF00883">
    <property type="entry name" value="Peptidase_M17"/>
    <property type="match status" value="1"/>
</dbReference>
<dbReference type="Pfam" id="PF02789">
    <property type="entry name" value="Peptidase_M17_N"/>
    <property type="match status" value="1"/>
</dbReference>
<dbReference type="PRINTS" id="PR00481">
    <property type="entry name" value="LAMNOPPTDASE"/>
</dbReference>
<dbReference type="SUPFAM" id="SSF52949">
    <property type="entry name" value="Macro domain-like"/>
    <property type="match status" value="1"/>
</dbReference>
<dbReference type="SUPFAM" id="SSF53187">
    <property type="entry name" value="Zn-dependent exopeptidases"/>
    <property type="match status" value="1"/>
</dbReference>
<dbReference type="PROSITE" id="PS00631">
    <property type="entry name" value="CYTOSOL_AP"/>
    <property type="match status" value="1"/>
</dbReference>
<comment type="function">
    <text evidence="1">Presumably involved in the processing and regular turnover of intracellular proteins. Catalyzes the removal of unsubstituted N-terminal amino acids from various peptides.</text>
</comment>
<comment type="catalytic activity">
    <reaction evidence="1">
        <text>Release of an N-terminal amino acid, Xaa-|-Yaa-, in which Xaa is preferably Leu, but may be other amino acids including Pro although not Arg or Lys, and Yaa may be Pro. Amino acid amides and methyl esters are also readily hydrolyzed, but rates on arylamides are exceedingly low.</text>
        <dbReference type="EC" id="3.4.11.1"/>
    </reaction>
</comment>
<comment type="catalytic activity">
    <reaction evidence="1">
        <text>Release of an N-terminal amino acid, preferentially leucine, but not glutamic or aspartic acids.</text>
        <dbReference type="EC" id="3.4.11.10"/>
    </reaction>
</comment>
<comment type="cofactor">
    <cofactor evidence="1">
        <name>Mn(2+)</name>
        <dbReference type="ChEBI" id="CHEBI:29035"/>
    </cofactor>
    <text evidence="1">Binds 2 manganese ions per subunit.</text>
</comment>
<comment type="subcellular location">
    <subcellularLocation>
        <location evidence="1">Cytoplasm</location>
    </subcellularLocation>
</comment>
<comment type="similarity">
    <text evidence="1">Belongs to the peptidase M17 family.</text>
</comment>
<reference key="1">
    <citation type="journal article" date="2005" name="Infect. Immun.">
        <title>Comparative genomic analysis of Chlamydia trachomatis oculotropic and genitotropic strains.</title>
        <authorList>
            <person name="Carlson J.H."/>
            <person name="Porcella S.F."/>
            <person name="McClarty G."/>
            <person name="Caldwell H.D."/>
        </authorList>
    </citation>
    <scope>NUCLEOTIDE SEQUENCE [LARGE SCALE GENOMIC DNA]</scope>
    <source>
        <strain>ATCC VR-571B / DSM 19440 / HAR-13</strain>
    </source>
</reference>
<organism>
    <name type="scientific">Chlamydia trachomatis serovar A (strain ATCC VR-571B / DSM 19440 / HAR-13)</name>
    <dbReference type="NCBI Taxonomy" id="315277"/>
    <lineage>
        <taxon>Bacteria</taxon>
        <taxon>Pseudomonadati</taxon>
        <taxon>Chlamydiota</taxon>
        <taxon>Chlamydiia</taxon>
        <taxon>Chlamydiales</taxon>
        <taxon>Chlamydiaceae</taxon>
        <taxon>Chlamydia/Chlamydophila group</taxon>
        <taxon>Chlamydia</taxon>
    </lineage>
</organism>
<name>AMPA_CHLTA</name>
<proteinExistence type="inferred from homology"/>